<proteinExistence type="evidence at protein level"/>
<name>YN8Z_YEAST</name>
<sequence length="219" mass="24317">MLKLTTTSVTFHVLRYFQLGLSVTNLLLASFAIITNYKVDRILRLSLAVSIISSVYFGIVRFLPVLLIFVMEIVQTVLWFTAFVTLASKFGSMSCSSMPRGINFDYSGSCKIAKIDILPEAVLFILFLATTYASYITVLSQAKENGSSTRSVLKACVKALRDTVDRLETSLEESEPLLDLEVQEDARTETESIEDSTDSEDNANIEQEKVIDGSIEHSS</sequence>
<organism>
    <name type="scientific">Saccharomyces cerevisiae (strain ATCC 204508 / S288c)</name>
    <name type="common">Baker's yeast</name>
    <dbReference type="NCBI Taxonomy" id="559292"/>
    <lineage>
        <taxon>Eukaryota</taxon>
        <taxon>Fungi</taxon>
        <taxon>Dikarya</taxon>
        <taxon>Ascomycota</taxon>
        <taxon>Saccharomycotina</taxon>
        <taxon>Saccharomycetes</taxon>
        <taxon>Saccharomycetales</taxon>
        <taxon>Saccharomycetaceae</taxon>
        <taxon>Saccharomyces</taxon>
    </lineage>
</organism>
<keyword id="KW-0472">Membrane</keyword>
<keyword id="KW-1185">Reference proteome</keyword>
<keyword id="KW-0812">Transmembrane</keyword>
<keyword id="KW-1133">Transmembrane helix</keyword>
<keyword id="KW-0926">Vacuole</keyword>
<comment type="subcellular location">
    <subcellularLocation>
        <location evidence="3">Vacuole membrane</location>
        <topology evidence="3">Multi-pass membrane protein</topology>
    </subcellularLocation>
</comment>
<comment type="miscellaneous">
    <text evidence="4">Present with 339 molecules/cell in log phase SD medium.</text>
</comment>
<protein>
    <recommendedName>
        <fullName>Uncharacterized vacuolar membrane protein YNR061C</fullName>
    </recommendedName>
</protein>
<reference key="1">
    <citation type="journal article" date="1997" name="Nature">
        <title>The nucleotide sequence of Saccharomyces cerevisiae chromosome XIV and its evolutionary implications.</title>
        <authorList>
            <person name="Philippsen P."/>
            <person name="Kleine K."/>
            <person name="Poehlmann R."/>
            <person name="Duesterhoeft A."/>
            <person name="Hamberg K."/>
            <person name="Hegemann J.H."/>
            <person name="Obermaier B."/>
            <person name="Urrestarazu L.A."/>
            <person name="Aert R."/>
            <person name="Albermann K."/>
            <person name="Altmann R."/>
            <person name="Andre B."/>
            <person name="Baladron V."/>
            <person name="Ballesta J.P.G."/>
            <person name="Becam A.-M."/>
            <person name="Beinhauer J.D."/>
            <person name="Boskovic J."/>
            <person name="Buitrago M.J."/>
            <person name="Bussereau F."/>
            <person name="Coster F."/>
            <person name="Crouzet M."/>
            <person name="D'Angelo M."/>
            <person name="Dal Pero F."/>
            <person name="De Antoni A."/>
            <person name="del Rey F."/>
            <person name="Doignon F."/>
            <person name="Domdey H."/>
            <person name="Dubois E."/>
            <person name="Fiedler T.A."/>
            <person name="Fleig U."/>
            <person name="Floeth M."/>
            <person name="Fritz C."/>
            <person name="Gaillardin C."/>
            <person name="Garcia-Cantalejo J.M."/>
            <person name="Glansdorff N."/>
            <person name="Goffeau A."/>
            <person name="Gueldener U."/>
            <person name="Herbert C.J."/>
            <person name="Heumann K."/>
            <person name="Heuss-Neitzel D."/>
            <person name="Hilbert H."/>
            <person name="Hinni K."/>
            <person name="Iraqui Houssaini I."/>
            <person name="Jacquet M."/>
            <person name="Jimenez A."/>
            <person name="Jonniaux J.-L."/>
            <person name="Karpfinger-Hartl L."/>
            <person name="Lanfranchi G."/>
            <person name="Lepingle A."/>
            <person name="Levesque H."/>
            <person name="Lyck R."/>
            <person name="Maftahi M."/>
            <person name="Mallet L."/>
            <person name="Maurer C.T.C."/>
            <person name="Messenguy F."/>
            <person name="Mewes H.-W."/>
            <person name="Moestl D."/>
            <person name="Nasr F."/>
            <person name="Nicaud J.-M."/>
            <person name="Niedenthal R.K."/>
            <person name="Pandolfo D."/>
            <person name="Pierard A."/>
            <person name="Piravandi E."/>
            <person name="Planta R.J."/>
            <person name="Pohl T.M."/>
            <person name="Purnelle B."/>
            <person name="Rebischung C."/>
            <person name="Remacha M.A."/>
            <person name="Revuelta J.L."/>
            <person name="Rinke M."/>
            <person name="Saiz J.E."/>
            <person name="Sartorello F."/>
            <person name="Scherens B."/>
            <person name="Sen-Gupta M."/>
            <person name="Soler-Mira A."/>
            <person name="Urbanus J.H.M."/>
            <person name="Valle G."/>
            <person name="Van Dyck L."/>
            <person name="Verhasselt P."/>
            <person name="Vierendeels F."/>
            <person name="Vissers S."/>
            <person name="Voet M."/>
            <person name="Volckaert G."/>
            <person name="Wach A."/>
            <person name="Wambutt R."/>
            <person name="Wedler H."/>
            <person name="Zollner A."/>
            <person name="Hani J."/>
        </authorList>
    </citation>
    <scope>NUCLEOTIDE SEQUENCE [LARGE SCALE GENOMIC DNA]</scope>
    <source>
        <strain>ATCC 204508 / S288c</strain>
    </source>
</reference>
<reference key="2">
    <citation type="journal article" date="2014" name="G3 (Bethesda)">
        <title>The reference genome sequence of Saccharomyces cerevisiae: Then and now.</title>
        <authorList>
            <person name="Engel S.R."/>
            <person name="Dietrich F.S."/>
            <person name="Fisk D.G."/>
            <person name="Binkley G."/>
            <person name="Balakrishnan R."/>
            <person name="Costanzo M.C."/>
            <person name="Dwight S.S."/>
            <person name="Hitz B.C."/>
            <person name="Karra K."/>
            <person name="Nash R.S."/>
            <person name="Weng S."/>
            <person name="Wong E.D."/>
            <person name="Lloyd P."/>
            <person name="Skrzypek M.S."/>
            <person name="Miyasato S.R."/>
            <person name="Simison M."/>
            <person name="Cherry J.M."/>
        </authorList>
    </citation>
    <scope>GENOME REANNOTATION</scope>
    <source>
        <strain>ATCC 204508 / S288c</strain>
    </source>
</reference>
<reference key="3">
    <citation type="journal article" date="2007" name="Genome Res.">
        <title>Approaching a complete repository of sequence-verified protein-encoding clones for Saccharomyces cerevisiae.</title>
        <authorList>
            <person name="Hu Y."/>
            <person name="Rolfs A."/>
            <person name="Bhullar B."/>
            <person name="Murthy T.V.S."/>
            <person name="Zhu C."/>
            <person name="Berger M.F."/>
            <person name="Camargo A.A."/>
            <person name="Kelley F."/>
            <person name="McCarron S."/>
            <person name="Jepson D."/>
            <person name="Richardson A."/>
            <person name="Raphael J."/>
            <person name="Moreira D."/>
            <person name="Taycher E."/>
            <person name="Zuo D."/>
            <person name="Mohr S."/>
            <person name="Kane M.F."/>
            <person name="Williamson J."/>
            <person name="Simpson A.J.G."/>
            <person name="Bulyk M.L."/>
            <person name="Harlow E."/>
            <person name="Marsischky G."/>
            <person name="Kolodner R.D."/>
            <person name="LaBaer J."/>
        </authorList>
    </citation>
    <scope>NUCLEOTIDE SEQUENCE [GENOMIC DNA]</scope>
    <source>
        <strain>ATCC 204508 / S288c</strain>
    </source>
</reference>
<reference key="4">
    <citation type="journal article" date="2003" name="Nature">
        <title>Global analysis of protein localization in budding yeast.</title>
        <authorList>
            <person name="Huh W.-K."/>
            <person name="Falvo J.V."/>
            <person name="Gerke L.C."/>
            <person name="Carroll A.S."/>
            <person name="Howson R.W."/>
            <person name="Weissman J.S."/>
            <person name="O'Shea E.K."/>
        </authorList>
    </citation>
    <scope>SUBCELLULAR LOCATION [LARGE SCALE ANALYSIS]</scope>
</reference>
<reference key="5">
    <citation type="journal article" date="2003" name="Nature">
        <title>Global analysis of protein expression in yeast.</title>
        <authorList>
            <person name="Ghaemmaghami S."/>
            <person name="Huh W.-K."/>
            <person name="Bower K."/>
            <person name="Howson R.W."/>
            <person name="Belle A."/>
            <person name="Dephoure N."/>
            <person name="O'Shea E.K."/>
            <person name="Weissman J.S."/>
        </authorList>
    </citation>
    <scope>LEVEL OF PROTEIN EXPRESSION [LARGE SCALE ANALYSIS]</scope>
</reference>
<reference key="6">
    <citation type="journal article" date="2006" name="Proc. Natl. Acad. Sci. U.S.A.">
        <title>A global topology map of the Saccharomyces cerevisiae membrane proteome.</title>
        <authorList>
            <person name="Kim H."/>
            <person name="Melen K."/>
            <person name="Oesterberg M."/>
            <person name="von Heijne G."/>
        </authorList>
    </citation>
    <scope>TOPOLOGY [LARGE SCALE ANALYSIS]</scope>
    <source>
        <strain>ATCC 208353 / W303-1A</strain>
    </source>
</reference>
<feature type="chain" id="PRO_0000203481" description="Uncharacterized vacuolar membrane protein YNR061C">
    <location>
        <begin position="1"/>
        <end position="219"/>
    </location>
</feature>
<feature type="topological domain" description="Cytoplasmic" evidence="1">
    <location>
        <begin position="1"/>
        <end position="15"/>
    </location>
</feature>
<feature type="transmembrane region" description="Helical" evidence="1">
    <location>
        <begin position="16"/>
        <end position="36"/>
    </location>
</feature>
<feature type="topological domain" description="Vacuolar" evidence="1">
    <location>
        <begin position="37"/>
        <end position="41"/>
    </location>
</feature>
<feature type="transmembrane region" description="Helical" evidence="1">
    <location>
        <begin position="42"/>
        <end position="62"/>
    </location>
</feature>
<feature type="topological domain" description="Cytoplasmic" evidence="1">
    <location>
        <position position="63"/>
    </location>
</feature>
<feature type="transmembrane region" description="Helical" evidence="1">
    <location>
        <begin position="64"/>
        <end position="84"/>
    </location>
</feature>
<feature type="topological domain" description="Vacuolar" evidence="1">
    <location>
        <begin position="85"/>
        <end position="116"/>
    </location>
</feature>
<feature type="transmembrane region" description="Helical" evidence="1">
    <location>
        <begin position="117"/>
        <end position="137"/>
    </location>
</feature>
<feature type="topological domain" description="Cytoplasmic" evidence="1">
    <location>
        <begin position="138"/>
        <end position="219"/>
    </location>
</feature>
<feature type="region of interest" description="Disordered" evidence="2">
    <location>
        <begin position="176"/>
        <end position="219"/>
    </location>
</feature>
<feature type="compositionally biased region" description="Acidic residues" evidence="2">
    <location>
        <begin position="191"/>
        <end position="203"/>
    </location>
</feature>
<feature type="compositionally biased region" description="Basic and acidic residues" evidence="2">
    <location>
        <begin position="206"/>
        <end position="219"/>
    </location>
</feature>
<dbReference type="EMBL" id="Z71676">
    <property type="protein sequence ID" value="CAA96343.1"/>
    <property type="molecule type" value="Genomic_DNA"/>
</dbReference>
<dbReference type="EMBL" id="AY558009">
    <property type="protein sequence ID" value="AAS56335.1"/>
    <property type="molecule type" value="Genomic_DNA"/>
</dbReference>
<dbReference type="EMBL" id="BK006947">
    <property type="protein sequence ID" value="DAA10602.1"/>
    <property type="molecule type" value="Genomic_DNA"/>
</dbReference>
<dbReference type="PIR" id="S63393">
    <property type="entry name" value="S63393"/>
</dbReference>
<dbReference type="RefSeq" id="NP_014459.1">
    <property type="nucleotide sequence ID" value="NM_001183238.1"/>
</dbReference>
<dbReference type="BioGRID" id="35887">
    <property type="interactions" value="85"/>
</dbReference>
<dbReference type="DIP" id="DIP-4462N"/>
<dbReference type="FunCoup" id="P53747">
    <property type="interactions" value="34"/>
</dbReference>
<dbReference type="STRING" id="4932.YNR061C"/>
<dbReference type="iPTMnet" id="P53747"/>
<dbReference type="PaxDb" id="4932-YNR061C"/>
<dbReference type="PeptideAtlas" id="P53747"/>
<dbReference type="EnsemblFungi" id="YNR061C_mRNA">
    <property type="protein sequence ID" value="YNR061C"/>
    <property type="gene ID" value="YNR061C"/>
</dbReference>
<dbReference type="GeneID" id="855798"/>
<dbReference type="KEGG" id="sce:YNR061C"/>
<dbReference type="AGR" id="SGD:S000005344"/>
<dbReference type="SGD" id="S000005344">
    <property type="gene designation" value="YNR061C"/>
</dbReference>
<dbReference type="VEuPathDB" id="FungiDB:YNR061C"/>
<dbReference type="HOGENOM" id="CLU_1262406_0_0_1"/>
<dbReference type="InParanoid" id="P53747"/>
<dbReference type="OrthoDB" id="4060531at2759"/>
<dbReference type="BioCyc" id="YEAST:G3O-33365-MONOMER"/>
<dbReference type="BioGRID-ORCS" id="855798">
    <property type="hits" value="0 hits in 10 CRISPR screens"/>
</dbReference>
<dbReference type="PRO" id="PR:P53747"/>
<dbReference type="Proteomes" id="UP000002311">
    <property type="component" value="Chromosome XIV"/>
</dbReference>
<dbReference type="RNAct" id="P53747">
    <property type="molecule type" value="protein"/>
</dbReference>
<dbReference type="GO" id="GO:0005737">
    <property type="term" value="C:cytoplasm"/>
    <property type="evidence" value="ECO:0007005"/>
    <property type="project" value="SGD"/>
</dbReference>
<dbReference type="GO" id="GO:0000324">
    <property type="term" value="C:fungal-type vacuole"/>
    <property type="evidence" value="ECO:0000314"/>
    <property type="project" value="SGD"/>
</dbReference>
<dbReference type="GO" id="GO:0000329">
    <property type="term" value="C:fungal-type vacuole membrane"/>
    <property type="evidence" value="ECO:0007005"/>
    <property type="project" value="SGD"/>
</dbReference>
<dbReference type="PANTHER" id="PTHR37451">
    <property type="entry name" value="MARVEL DOMAIN"/>
    <property type="match status" value="1"/>
</dbReference>
<dbReference type="PANTHER" id="PTHR37451:SF1">
    <property type="entry name" value="MARVEL DOMAIN-CONTAINING PROTEIN"/>
    <property type="match status" value="1"/>
</dbReference>
<evidence type="ECO:0000255" key="1"/>
<evidence type="ECO:0000256" key="2">
    <source>
        <dbReference type="SAM" id="MobiDB-lite"/>
    </source>
</evidence>
<evidence type="ECO:0000269" key="3">
    <source>
    </source>
</evidence>
<evidence type="ECO:0000269" key="4">
    <source>
    </source>
</evidence>
<accession>P53747</accession>
<accession>D6W1N6</accession>
<gene>
    <name type="ordered locus">YNR061C</name>
    <name type="ORF">N3523</name>
</gene>